<name>NOCL_NOCUT</name>
<gene>
    <name evidence="5" type="primary">nocL</name>
</gene>
<reference key="1">
    <citation type="journal article" date="2004" name="Chem. Biol.">
        <title>The biosynthetic gene cluster for a monocyclic beta-lactam antibiotic, nocardicin A.</title>
        <authorList>
            <person name="Gunsior M."/>
            <person name="Breazeale S.D."/>
            <person name="Lind A.J."/>
            <person name="Ravel J."/>
            <person name="Janc J.W."/>
            <person name="Townsend C.A."/>
        </authorList>
    </citation>
    <scope>NUCLEOTIDE SEQUENCE [GENOMIC DNA]</scope>
    <source>
        <strain>ATCC 21806 / CECT 3282 / JCM 3279 / WS 1571</strain>
    </source>
</reference>
<reference key="2">
    <citation type="journal article" date="2002" name="J. Am. Chem. Soc.">
        <title>Role of the cytochrome P450 NocL in nocardicin A biosynthesis.</title>
        <authorList>
            <person name="Kelly W.L."/>
            <person name="Townsend C.A."/>
        </authorList>
    </citation>
    <scope>FUNCTION</scope>
    <scope>CATALYTIC ACTIVITY</scope>
    <source>
        <strain>ATCC 21806 / CECT 3282 / JCM 3279 / WS 1571</strain>
    </source>
</reference>
<reference key="3">
    <citation type="journal article" date="2005" name="J. Bacteriol.">
        <title>Mutational analysis of nocK and nocL in the nocardicin a producer Nocardia uniformis.</title>
        <authorList>
            <person name="Kelly W.L."/>
            <person name="Townsend C.A."/>
        </authorList>
    </citation>
    <scope>FUNCTION</scope>
    <scope>CATALYTIC ACTIVITY</scope>
    <scope>PATHWAY</scope>
    <scope>DISRUPTION PHENOTYPE</scope>
    <source>
        <strain>ATCC 21806 / CECT 3282 / JCM 3279 / WS 1571</strain>
    </source>
</reference>
<feature type="chain" id="PRO_0000456704" description="Nocardicin C N-oxygenase">
    <location>
        <begin position="1"/>
        <end position="398"/>
    </location>
</feature>
<feature type="region of interest" description="Disordered" evidence="2">
    <location>
        <begin position="63"/>
        <end position="90"/>
    </location>
</feature>
<feature type="binding site" evidence="1">
    <location>
        <position position="93"/>
    </location>
    <ligand>
        <name>heme</name>
        <dbReference type="ChEBI" id="CHEBI:30413"/>
    </ligand>
</feature>
<feature type="binding site" evidence="1">
    <location>
        <position position="97"/>
    </location>
    <ligand>
        <name>heme</name>
        <dbReference type="ChEBI" id="CHEBI:30413"/>
    </ligand>
</feature>
<feature type="binding site" evidence="1">
    <location>
        <position position="289"/>
    </location>
    <ligand>
        <name>heme</name>
        <dbReference type="ChEBI" id="CHEBI:30413"/>
    </ligand>
</feature>
<feature type="binding site" evidence="1">
    <location>
        <position position="345"/>
    </location>
    <ligand>
        <name>heme</name>
        <dbReference type="ChEBI" id="CHEBI:30413"/>
    </ligand>
</feature>
<feature type="binding site" description="axial binding residue" evidence="1">
    <location>
        <position position="347"/>
    </location>
    <ligand>
        <name>heme</name>
        <dbReference type="ChEBI" id="CHEBI:30413"/>
    </ligand>
    <ligandPart>
        <name>Fe</name>
        <dbReference type="ChEBI" id="CHEBI:18248"/>
    </ligandPart>
</feature>
<keyword id="KW-0045">Antibiotic biosynthesis</keyword>
<keyword id="KW-0349">Heme</keyword>
<keyword id="KW-0408">Iron</keyword>
<keyword id="KW-0479">Metal-binding</keyword>
<keyword id="KW-0503">Monooxygenase</keyword>
<keyword id="KW-0560">Oxidoreductase</keyword>
<protein>
    <recommendedName>
        <fullName evidence="6">Nocardicin C N-oxygenase</fullName>
        <ecNumber evidence="7">1.14.15.43</ecNumber>
    </recommendedName>
</protein>
<comment type="function">
    <text evidence="3 4">Involved in the biosynthesis of the beta-lactam antibiotic nocardicin A (PubMed:12105888, PubMed:15629944). Catalyzes the conversion of nocardicin C to nocardicin A (PubMed:12105888). Cannot use nocardicin G (PubMed:12105888).</text>
</comment>
<comment type="catalytic activity">
    <reaction evidence="3 4">
        <text>nocardicin C + 4 reduced [2Fe-2S]-[ferredoxin] + 2 O2 + 2 H(+) = nocardicin A + 4 oxidized [2Fe-2S]-[ferredoxin] + 3 H2O</text>
        <dbReference type="Rhea" id="RHEA:82031"/>
        <dbReference type="Rhea" id="RHEA-COMP:10000"/>
        <dbReference type="Rhea" id="RHEA-COMP:10001"/>
        <dbReference type="ChEBI" id="CHEBI:15377"/>
        <dbReference type="ChEBI" id="CHEBI:15378"/>
        <dbReference type="ChEBI" id="CHEBI:15379"/>
        <dbReference type="ChEBI" id="CHEBI:33737"/>
        <dbReference type="ChEBI" id="CHEBI:33738"/>
        <dbReference type="ChEBI" id="CHEBI:77658"/>
        <dbReference type="ChEBI" id="CHEBI:131948"/>
        <dbReference type="EC" id="1.14.15.43"/>
    </reaction>
</comment>
<comment type="cofactor">
    <cofactor evidence="1">
        <name>heme</name>
        <dbReference type="ChEBI" id="CHEBI:30413"/>
    </cofactor>
</comment>
<comment type="pathway">
    <text evidence="4 8">Antibiotic biosynthesis.</text>
</comment>
<comment type="disruption phenotype">
    <text evidence="4">Disruption of the gene abolishes nocardicin A production, and the mutant accumulates the biosynthetic intermediate nocardicin C.</text>
</comment>
<comment type="similarity">
    <text evidence="6">Belongs to the cytochrome P450 family.</text>
</comment>
<organism>
    <name type="scientific">Nocardia uniformis subsp. tsuyamanensis</name>
    <dbReference type="NCBI Taxonomy" id="96045"/>
    <lineage>
        <taxon>Bacteria</taxon>
        <taxon>Bacillati</taxon>
        <taxon>Actinomycetota</taxon>
        <taxon>Actinomycetes</taxon>
        <taxon>Mycobacteriales</taxon>
        <taxon>Nocardiaceae</taxon>
        <taxon>Nocardia</taxon>
    </lineage>
</organism>
<accession>Q5J1R4</accession>
<evidence type="ECO:0000250" key="1">
    <source>
        <dbReference type="UniProtKB" id="Q59523"/>
    </source>
</evidence>
<evidence type="ECO:0000256" key="2">
    <source>
        <dbReference type="SAM" id="MobiDB-lite"/>
    </source>
</evidence>
<evidence type="ECO:0000269" key="3">
    <source>
    </source>
</evidence>
<evidence type="ECO:0000269" key="4">
    <source>
    </source>
</evidence>
<evidence type="ECO:0000303" key="5">
    <source>
    </source>
</evidence>
<evidence type="ECO:0000305" key="6"/>
<evidence type="ECO:0000305" key="7">
    <source>
    </source>
</evidence>
<evidence type="ECO:0000305" key="8">
    <source>
    </source>
</evidence>
<sequence length="398" mass="43696">MTRTDTRSYPFGDPVALDLHPGYAPLRAEQPALRVRLPYGEDCWLVTRHEDVKAVLSDSRFSRARAAGREETPRVTPEAAPAGSMLSMDPPEHSRLRKLIARAFTSRRVREFRPRTQEIVDGLLDQVEQAGAPADLVAGLALPLPVSVISQMLGVPTEDHYRFRDFSATVLSTTAHTREEIVAARAALEEYLGELADQRRREPGEDLMSALVAAHDDDRLTDRELTQTGITLLVGGHESTASQFACSVYLLLERPERWALLRDNPELVPTAVEELLRFIPLGSGGAFARIATEDVEVGGVLVRAGEAVVASTNSANRDDRVFTDPDVLDLAREHNPHLAFGGGVHVCLGAQLARGELQVALTSLLTRFPGLRLAVPPEQVPWRQGSLLRSPVELPVTW</sequence>
<dbReference type="EC" id="1.14.15.43" evidence="7"/>
<dbReference type="EMBL" id="AY541063">
    <property type="protein sequence ID" value="AAT09797.1"/>
    <property type="molecule type" value="Genomic_DNA"/>
</dbReference>
<dbReference type="SMR" id="Q5J1R4"/>
<dbReference type="KEGG" id="ag:AAT09797"/>
<dbReference type="BioCyc" id="MetaCyc:MONOMER-19910"/>
<dbReference type="GO" id="GO:0020037">
    <property type="term" value="F:heme binding"/>
    <property type="evidence" value="ECO:0007669"/>
    <property type="project" value="InterPro"/>
</dbReference>
<dbReference type="GO" id="GO:0005506">
    <property type="term" value="F:iron ion binding"/>
    <property type="evidence" value="ECO:0007669"/>
    <property type="project" value="InterPro"/>
</dbReference>
<dbReference type="GO" id="GO:0004497">
    <property type="term" value="F:monooxygenase activity"/>
    <property type="evidence" value="ECO:0007669"/>
    <property type="project" value="UniProtKB-KW"/>
</dbReference>
<dbReference type="GO" id="GO:0016705">
    <property type="term" value="F:oxidoreductase activity, acting on paired donors, with incorporation or reduction of molecular oxygen"/>
    <property type="evidence" value="ECO:0007669"/>
    <property type="project" value="InterPro"/>
</dbReference>
<dbReference type="GO" id="GO:0017000">
    <property type="term" value="P:antibiotic biosynthetic process"/>
    <property type="evidence" value="ECO:0007669"/>
    <property type="project" value="UniProtKB-KW"/>
</dbReference>
<dbReference type="CDD" id="cd11031">
    <property type="entry name" value="Cyp158A-like"/>
    <property type="match status" value="1"/>
</dbReference>
<dbReference type="FunFam" id="1.10.630.10:FF:000018">
    <property type="entry name" value="Cytochrome P450 monooxygenase"/>
    <property type="match status" value="1"/>
</dbReference>
<dbReference type="Gene3D" id="1.10.630.10">
    <property type="entry name" value="Cytochrome P450"/>
    <property type="match status" value="1"/>
</dbReference>
<dbReference type="InterPro" id="IPR001128">
    <property type="entry name" value="Cyt_P450"/>
</dbReference>
<dbReference type="InterPro" id="IPR002397">
    <property type="entry name" value="Cyt_P450_B"/>
</dbReference>
<dbReference type="InterPro" id="IPR017972">
    <property type="entry name" value="Cyt_P450_CS"/>
</dbReference>
<dbReference type="InterPro" id="IPR036396">
    <property type="entry name" value="Cyt_P450_sf"/>
</dbReference>
<dbReference type="PANTHER" id="PTHR46696:SF1">
    <property type="entry name" value="CYTOCHROME P450 YJIB-RELATED"/>
    <property type="match status" value="1"/>
</dbReference>
<dbReference type="PANTHER" id="PTHR46696">
    <property type="entry name" value="P450, PUTATIVE (EUROFUNG)-RELATED"/>
    <property type="match status" value="1"/>
</dbReference>
<dbReference type="Pfam" id="PF00067">
    <property type="entry name" value="p450"/>
    <property type="match status" value="1"/>
</dbReference>
<dbReference type="PRINTS" id="PR00359">
    <property type="entry name" value="BP450"/>
</dbReference>
<dbReference type="PRINTS" id="PR00385">
    <property type="entry name" value="P450"/>
</dbReference>
<dbReference type="SUPFAM" id="SSF48264">
    <property type="entry name" value="Cytochrome P450"/>
    <property type="match status" value="1"/>
</dbReference>
<dbReference type="PROSITE" id="PS00086">
    <property type="entry name" value="CYTOCHROME_P450"/>
    <property type="match status" value="1"/>
</dbReference>
<proteinExistence type="evidence at protein level"/>